<accession>Q2GI94</accession>
<sequence>MSDLLKEFNEQQMKLLSNKEIPKFSSGDTLRVSMKIFDGVSERLQVFEGVCIKRKNNGLHSSFTLRKISYNESIQLQVFLYSPIVESIEVIKFGRVRRAKLYYMLSLFGKSARIKERSDRTKKLS</sequence>
<organism>
    <name type="scientific">Ehrlichia chaffeensis (strain ATCC CRL-10679 / Arkansas)</name>
    <dbReference type="NCBI Taxonomy" id="205920"/>
    <lineage>
        <taxon>Bacteria</taxon>
        <taxon>Pseudomonadati</taxon>
        <taxon>Pseudomonadota</taxon>
        <taxon>Alphaproteobacteria</taxon>
        <taxon>Rickettsiales</taxon>
        <taxon>Anaplasmataceae</taxon>
        <taxon>Ehrlichia</taxon>
    </lineage>
</organism>
<dbReference type="EMBL" id="CP000236">
    <property type="protein sequence ID" value="ABD45556.1"/>
    <property type="molecule type" value="Genomic_DNA"/>
</dbReference>
<dbReference type="RefSeq" id="WP_011452343.1">
    <property type="nucleotide sequence ID" value="NC_007799.1"/>
</dbReference>
<dbReference type="SMR" id="Q2GI94"/>
<dbReference type="STRING" id="205920.ECH_0004"/>
<dbReference type="KEGG" id="ech:ECH_0004"/>
<dbReference type="eggNOG" id="COG0335">
    <property type="taxonomic scope" value="Bacteria"/>
</dbReference>
<dbReference type="HOGENOM" id="CLU_103507_2_2_5"/>
<dbReference type="Proteomes" id="UP000008320">
    <property type="component" value="Chromosome"/>
</dbReference>
<dbReference type="GO" id="GO:0022625">
    <property type="term" value="C:cytosolic large ribosomal subunit"/>
    <property type="evidence" value="ECO:0007669"/>
    <property type="project" value="TreeGrafter"/>
</dbReference>
<dbReference type="GO" id="GO:0003735">
    <property type="term" value="F:structural constituent of ribosome"/>
    <property type="evidence" value="ECO:0007669"/>
    <property type="project" value="InterPro"/>
</dbReference>
<dbReference type="GO" id="GO:0006412">
    <property type="term" value="P:translation"/>
    <property type="evidence" value="ECO:0007669"/>
    <property type="project" value="UniProtKB-UniRule"/>
</dbReference>
<dbReference type="Gene3D" id="2.30.30.790">
    <property type="match status" value="1"/>
</dbReference>
<dbReference type="HAMAP" id="MF_00402">
    <property type="entry name" value="Ribosomal_bL19"/>
    <property type="match status" value="1"/>
</dbReference>
<dbReference type="InterPro" id="IPR001857">
    <property type="entry name" value="Ribosomal_bL19"/>
</dbReference>
<dbReference type="InterPro" id="IPR038657">
    <property type="entry name" value="Ribosomal_bL19_sf"/>
</dbReference>
<dbReference type="InterPro" id="IPR008991">
    <property type="entry name" value="Translation_prot_SH3-like_sf"/>
</dbReference>
<dbReference type="NCBIfam" id="TIGR01024">
    <property type="entry name" value="rplS_bact"/>
    <property type="match status" value="1"/>
</dbReference>
<dbReference type="PANTHER" id="PTHR15680:SF9">
    <property type="entry name" value="LARGE RIBOSOMAL SUBUNIT PROTEIN BL19M"/>
    <property type="match status" value="1"/>
</dbReference>
<dbReference type="PANTHER" id="PTHR15680">
    <property type="entry name" value="RIBOSOMAL PROTEIN L19"/>
    <property type="match status" value="1"/>
</dbReference>
<dbReference type="Pfam" id="PF01245">
    <property type="entry name" value="Ribosomal_L19"/>
    <property type="match status" value="1"/>
</dbReference>
<dbReference type="PIRSF" id="PIRSF002191">
    <property type="entry name" value="Ribosomal_L19"/>
    <property type="match status" value="1"/>
</dbReference>
<dbReference type="PRINTS" id="PR00061">
    <property type="entry name" value="RIBOSOMALL19"/>
</dbReference>
<dbReference type="SUPFAM" id="SSF50104">
    <property type="entry name" value="Translation proteins SH3-like domain"/>
    <property type="match status" value="1"/>
</dbReference>
<comment type="function">
    <text evidence="1">This protein is located at the 30S-50S ribosomal subunit interface and may play a role in the structure and function of the aminoacyl-tRNA binding site.</text>
</comment>
<comment type="similarity">
    <text evidence="1">Belongs to the bacterial ribosomal protein bL19 family.</text>
</comment>
<name>RL19_EHRCR</name>
<evidence type="ECO:0000255" key="1">
    <source>
        <dbReference type="HAMAP-Rule" id="MF_00402"/>
    </source>
</evidence>
<evidence type="ECO:0000305" key="2"/>
<proteinExistence type="inferred from homology"/>
<protein>
    <recommendedName>
        <fullName evidence="1">Large ribosomal subunit protein bL19</fullName>
    </recommendedName>
    <alternativeName>
        <fullName evidence="2">50S ribosomal protein L19</fullName>
    </alternativeName>
</protein>
<gene>
    <name evidence="1" type="primary">rplS</name>
    <name type="ordered locus">ECH_0004</name>
</gene>
<feature type="chain" id="PRO_0000252506" description="Large ribosomal subunit protein bL19">
    <location>
        <begin position="1"/>
        <end position="125"/>
    </location>
</feature>
<keyword id="KW-1185">Reference proteome</keyword>
<keyword id="KW-0687">Ribonucleoprotein</keyword>
<keyword id="KW-0689">Ribosomal protein</keyword>
<reference key="1">
    <citation type="journal article" date="2006" name="PLoS Genet.">
        <title>Comparative genomics of emerging human ehrlichiosis agents.</title>
        <authorList>
            <person name="Dunning Hotopp J.C."/>
            <person name="Lin M."/>
            <person name="Madupu R."/>
            <person name="Crabtree J."/>
            <person name="Angiuoli S.V."/>
            <person name="Eisen J.A."/>
            <person name="Seshadri R."/>
            <person name="Ren Q."/>
            <person name="Wu M."/>
            <person name="Utterback T.R."/>
            <person name="Smith S."/>
            <person name="Lewis M."/>
            <person name="Khouri H."/>
            <person name="Zhang C."/>
            <person name="Niu H."/>
            <person name="Lin Q."/>
            <person name="Ohashi N."/>
            <person name="Zhi N."/>
            <person name="Nelson W.C."/>
            <person name="Brinkac L.M."/>
            <person name="Dodson R.J."/>
            <person name="Rosovitz M.J."/>
            <person name="Sundaram J.P."/>
            <person name="Daugherty S.C."/>
            <person name="Davidsen T."/>
            <person name="Durkin A.S."/>
            <person name="Gwinn M.L."/>
            <person name="Haft D.H."/>
            <person name="Selengut J.D."/>
            <person name="Sullivan S.A."/>
            <person name="Zafar N."/>
            <person name="Zhou L."/>
            <person name="Benahmed F."/>
            <person name="Forberger H."/>
            <person name="Halpin R."/>
            <person name="Mulligan S."/>
            <person name="Robinson J."/>
            <person name="White O."/>
            <person name="Rikihisa Y."/>
            <person name="Tettelin H."/>
        </authorList>
    </citation>
    <scope>NUCLEOTIDE SEQUENCE [LARGE SCALE GENOMIC DNA]</scope>
    <source>
        <strain>ATCC CRL-10679 / Arkansas</strain>
    </source>
</reference>